<accession>Q0KIC3</accession>
<accession>B5RIU0</accession>
<accession>Q8SX99</accession>
<dbReference type="EMBL" id="AE014297">
    <property type="protein sequence ID" value="AAF52104.2"/>
    <property type="molecule type" value="Genomic_DNA"/>
</dbReference>
<dbReference type="EMBL" id="AE014297">
    <property type="protein sequence ID" value="AAO41500.1"/>
    <property type="molecule type" value="Genomic_DNA"/>
</dbReference>
<dbReference type="EMBL" id="AY094730">
    <property type="protein sequence ID" value="AAM11083.1"/>
    <property type="molecule type" value="mRNA"/>
</dbReference>
<dbReference type="EMBL" id="BT044214">
    <property type="protein sequence ID" value="ACH92279.1"/>
    <property type="molecule type" value="mRNA"/>
</dbReference>
<dbReference type="SMR" id="Q0KIC3"/>
<dbReference type="BioGRID" id="65802">
    <property type="interactions" value="30"/>
</dbReference>
<dbReference type="FunCoup" id="Q0KIC3">
    <property type="interactions" value="16"/>
</dbReference>
<dbReference type="IntAct" id="Q0KIC3">
    <property type="interactions" value="1"/>
</dbReference>
<dbReference type="STRING" id="7227.FBpp0301012"/>
<dbReference type="GlyGen" id="Q0KIC3">
    <property type="glycosylation" value="3 sites"/>
</dbReference>
<dbReference type="PaxDb" id="7227-FBpp0301012"/>
<dbReference type="DNASU" id="40583"/>
<dbReference type="EnsemblMetazoa" id="FBtr0308849">
    <property type="protein sequence ID" value="FBpp0301004"/>
    <property type="gene ID" value="FBgn0263346"/>
</dbReference>
<dbReference type="EnsemblMetazoa" id="FBtr0308850">
    <property type="protein sequence ID" value="FBpp0301005"/>
    <property type="gene ID" value="FBgn0263346"/>
</dbReference>
<dbReference type="EnsemblMetazoa" id="FBtr0308851">
    <property type="protein sequence ID" value="FBpp0301006"/>
    <property type="gene ID" value="FBgn0263346"/>
</dbReference>
<dbReference type="GeneID" id="40583"/>
<dbReference type="KEGG" id="dme:Dmel_CG43427"/>
<dbReference type="UCSC" id="CG31531-RA">
    <property type="organism name" value="d. melanogaster"/>
</dbReference>
<dbReference type="AGR" id="FB:FBgn0263346"/>
<dbReference type="CTD" id="40583"/>
<dbReference type="FlyBase" id="FBgn0263346">
    <property type="gene designation" value="CG43427"/>
</dbReference>
<dbReference type="VEuPathDB" id="VectorBase:FBgn0263346"/>
<dbReference type="eggNOG" id="KOG1704">
    <property type="taxonomic scope" value="Eukaryota"/>
</dbReference>
<dbReference type="HOGENOM" id="CLU_250422_0_0_1"/>
<dbReference type="InParanoid" id="Q0KIC3"/>
<dbReference type="OMA" id="EMVHARN"/>
<dbReference type="OrthoDB" id="15627at2759"/>
<dbReference type="BioGRID-ORCS" id="40583">
    <property type="hits" value="0 hits in 3 CRISPR screens"/>
</dbReference>
<dbReference type="GenomeRNAi" id="40583"/>
<dbReference type="PRO" id="PR:Q0KIC3"/>
<dbReference type="Proteomes" id="UP000000803">
    <property type="component" value="Chromosome 3R"/>
</dbReference>
<dbReference type="Bgee" id="FBgn0263346">
    <property type="expression patterns" value="Expressed in adult Malpighian tubule principal cell of lower segment in Malpighian tubule and 295 other cell types or tissues"/>
</dbReference>
<dbReference type="ExpressionAtlas" id="Q0KIC3">
    <property type="expression patterns" value="baseline and differential"/>
</dbReference>
<dbReference type="GO" id="GO:0005911">
    <property type="term" value="C:cell-cell junction"/>
    <property type="evidence" value="ECO:0000314"/>
    <property type="project" value="FlyBase"/>
</dbReference>
<dbReference type="GO" id="GO:0005737">
    <property type="term" value="C:cytoplasm"/>
    <property type="evidence" value="ECO:0000318"/>
    <property type="project" value="GO_Central"/>
</dbReference>
<dbReference type="GO" id="GO:0005915">
    <property type="term" value="C:zonula adherens"/>
    <property type="evidence" value="ECO:0000314"/>
    <property type="project" value="FlyBase"/>
</dbReference>
<dbReference type="GO" id="GO:0008017">
    <property type="term" value="F:microtubule binding"/>
    <property type="evidence" value="ECO:0000318"/>
    <property type="project" value="GO_Central"/>
</dbReference>
<dbReference type="GO" id="GO:0030036">
    <property type="term" value="P:actin cytoskeleton organization"/>
    <property type="evidence" value="ECO:0000318"/>
    <property type="project" value="GO_Central"/>
</dbReference>
<dbReference type="GO" id="GO:0016331">
    <property type="term" value="P:morphogenesis of embryonic epithelium"/>
    <property type="evidence" value="ECO:0000315"/>
    <property type="project" value="FlyBase"/>
</dbReference>
<dbReference type="GO" id="GO:0150105">
    <property type="term" value="P:protein localization to cell-cell junction"/>
    <property type="evidence" value="ECO:0000315"/>
    <property type="project" value="FlyBase"/>
</dbReference>
<dbReference type="InterPro" id="IPR031865">
    <property type="entry name" value="DUF4757"/>
</dbReference>
<dbReference type="Pfam" id="PF15949">
    <property type="entry name" value="DUF4757"/>
    <property type="match status" value="1"/>
</dbReference>
<feature type="chain" id="PRO_0000337155" description="Uncharacterized protein CG43427">
    <location>
        <begin position="1"/>
        <end position="1372"/>
    </location>
</feature>
<feature type="region of interest" description="Disordered" evidence="2">
    <location>
        <begin position="1"/>
        <end position="67"/>
    </location>
</feature>
<feature type="region of interest" description="Disordered" evidence="2">
    <location>
        <begin position="178"/>
        <end position="199"/>
    </location>
</feature>
<feature type="region of interest" description="Disordered" evidence="2">
    <location>
        <begin position="238"/>
        <end position="287"/>
    </location>
</feature>
<feature type="region of interest" description="Disordered" evidence="2">
    <location>
        <begin position="380"/>
        <end position="414"/>
    </location>
</feature>
<feature type="region of interest" description="Disordered" evidence="2">
    <location>
        <begin position="427"/>
        <end position="447"/>
    </location>
</feature>
<feature type="region of interest" description="Disordered" evidence="2">
    <location>
        <begin position="486"/>
        <end position="531"/>
    </location>
</feature>
<feature type="region of interest" description="Disordered" evidence="2">
    <location>
        <begin position="652"/>
        <end position="679"/>
    </location>
</feature>
<feature type="region of interest" description="Disordered" evidence="2">
    <location>
        <begin position="799"/>
        <end position="820"/>
    </location>
</feature>
<feature type="region of interest" description="Disordered" evidence="2">
    <location>
        <begin position="860"/>
        <end position="897"/>
    </location>
</feature>
<feature type="region of interest" description="Disordered" evidence="2">
    <location>
        <begin position="1151"/>
        <end position="1181"/>
    </location>
</feature>
<feature type="region of interest" description="Disordered" evidence="2">
    <location>
        <begin position="1231"/>
        <end position="1250"/>
    </location>
</feature>
<feature type="coiled-coil region" evidence="1">
    <location>
        <begin position="75"/>
        <end position="143"/>
    </location>
</feature>
<feature type="coiled-coil region" evidence="1">
    <location>
        <begin position="409"/>
        <end position="438"/>
    </location>
</feature>
<feature type="coiled-coil region" evidence="1">
    <location>
        <begin position="539"/>
        <end position="580"/>
    </location>
</feature>
<feature type="compositionally biased region" description="Polar residues" evidence="2">
    <location>
        <begin position="17"/>
        <end position="28"/>
    </location>
</feature>
<feature type="compositionally biased region" description="Low complexity" evidence="2">
    <location>
        <begin position="184"/>
        <end position="198"/>
    </location>
</feature>
<feature type="compositionally biased region" description="Low complexity" evidence="2">
    <location>
        <begin position="238"/>
        <end position="251"/>
    </location>
</feature>
<feature type="compositionally biased region" description="Polar residues" evidence="2">
    <location>
        <begin position="257"/>
        <end position="287"/>
    </location>
</feature>
<feature type="compositionally biased region" description="Polar residues" evidence="2">
    <location>
        <begin position="399"/>
        <end position="408"/>
    </location>
</feature>
<feature type="compositionally biased region" description="Basic and acidic residues" evidence="2">
    <location>
        <begin position="486"/>
        <end position="499"/>
    </location>
</feature>
<feature type="compositionally biased region" description="Low complexity" evidence="2">
    <location>
        <begin position="514"/>
        <end position="523"/>
    </location>
</feature>
<feature type="compositionally biased region" description="Low complexity" evidence="2">
    <location>
        <begin position="652"/>
        <end position="673"/>
    </location>
</feature>
<feature type="compositionally biased region" description="Polar residues" evidence="2">
    <location>
        <begin position="860"/>
        <end position="871"/>
    </location>
</feature>
<feature type="compositionally biased region" description="Polar residues" evidence="2">
    <location>
        <begin position="1151"/>
        <end position="1160"/>
    </location>
</feature>
<feature type="sequence variant" description="In RNA edited version." evidence="5">
    <original>K</original>
    <variation>E</variation>
    <location>
        <position position="679"/>
    </location>
</feature>
<protein>
    <recommendedName>
        <fullName>Uncharacterized protein CG43427</fullName>
    </recommendedName>
</protein>
<name>Y3427_DROME</name>
<evidence type="ECO:0000255" key="1"/>
<evidence type="ECO:0000256" key="2">
    <source>
        <dbReference type="SAM" id="MobiDB-lite"/>
    </source>
</evidence>
<evidence type="ECO:0000269" key="3">
    <source>
    </source>
</evidence>
<evidence type="ECO:0000269" key="4">
    <source>
    </source>
</evidence>
<evidence type="ECO:0000269" key="5">
    <source>
    </source>
</evidence>
<evidence type="ECO:0000305" key="6"/>
<evidence type="ECO:0000312" key="7">
    <source>
        <dbReference type="EMBL" id="AAF52104.2"/>
    </source>
</evidence>
<evidence type="ECO:0000312" key="8">
    <source>
        <dbReference type="EMBL" id="AAM11083.1"/>
    </source>
</evidence>
<sequence length="1372" mass="149300">MEATDQEVMLEGREDLMSTSATSSTNGGDTNGCGKKLSVTSPDPTPYVTKQRVTRPTPPAPSKNPMQFVQIKPCNLYQTAQEQLKKAEEVKKLKEVKKEEPEEWQNNLDNWKSSRRKRVEHIIDRAVETKKLELEEHDRLRRKSKTFTEMMEERAERGGPRGRAKLASLAVYNEDETNDLSDLGIGTSSASGKSSLSGDYDNNSVMSDHAAELDKAIGAASSVAAGVTAQNVDEQLNHINRNGSNGNHGNGAAVGQTGPSNSSKSAGRQYISSPGYDTSSSNAQASSPDLCEYTYEGAIQDYKQRVQRASSNGNGNANGKLIGEHIAYPTRRGSKIEDRLSGFEVTSPSDTQEGVEKQKVDVPKVDISKRKEIFEQAKAEVSNGGAPAAPKLVFRDGLTNGNSATTAPKSEVRRLSGDISSIRDRMQSLEQQRKAFSSSKSVDVPVPPLKQRLNSLQQSVAKEEQKKPPLVALIDARQLEIMRGEEERMRQQQQKEKHSPSQTTLCAPKPAPPALIIEEPPVADTNDDSGIQEDTADELQQQQQLNAAIAALALEERQLEEAANAVNQIEAEFDELTDLHPSPLPPSPALPAVQQSLQQPTVAQVPAQAVNQAAAPPLRDMEFSVSCTNNFIEPAKISPCDVNVVAASAVSVSKSGPTPNPTSTPNMVSSSPNCNLRRKPSNEMVHHRNLLKMFKETFQNDDDLKEVCEIVTSPGQFTQIIDFSKRPSNPPIPIPTLLPTSTPIPTQIPRPLGKPPMSPKAVRLASSPKGHINPLSSPTNSGFSPPQFSINGRVEIFNSRQLDKPPTPPAPPKKTVRSEHPLKEAVPSPEVVMCAPPMTIVDPDELPKPNTVKALSNCFSQSDSKSLTSPIMSPKPLPSGRIPQITPPASPKPPKRVQLDEVDRSSGDYAPVVGQTKAIVHTPPSKINARANQTLDPLAPNDSLCLHTSSPSEIPSLKACSPNESSLFKLASSRPTSPSVDVASCQKFLNREAPKDIQLAEEDRKRMDQFAVEEMPCDKIDVTKSPQPNTGFQIVTEDLVKKCDGKNISEAVRDLDVPPSQEDIALCAGLLDCLAPAQEPICDSIDVRNGPVPATGFQDISEEEVKKCEKHNKNYVITNRPSSPIGSVRAAHSKALMDTCEQIIAEERKASSQMMKTSLPESVEKPSTPLPGRKSKIPIPKPCCISASGTDSISRAGYVPTAPSHLSGSAQQPLIARTHVVETEIKVKEISPPSIPKTPEQTQLHASPTKEKKAKNIFDFLRRNFGHQEEPQHHSTLNETLEKKVVLTSTKSGVDVVNADEFVRVDNSKFYLASELEDVPVPPPLPKTPAPVNIEIRKKITTNEILEENTTEQALTQEISDLLDDEIMKLEN</sequence>
<organism>
    <name type="scientific">Drosophila melanogaster</name>
    <name type="common">Fruit fly</name>
    <dbReference type="NCBI Taxonomy" id="7227"/>
    <lineage>
        <taxon>Eukaryota</taxon>
        <taxon>Metazoa</taxon>
        <taxon>Ecdysozoa</taxon>
        <taxon>Arthropoda</taxon>
        <taxon>Hexapoda</taxon>
        <taxon>Insecta</taxon>
        <taxon>Pterygota</taxon>
        <taxon>Neoptera</taxon>
        <taxon>Endopterygota</taxon>
        <taxon>Diptera</taxon>
        <taxon>Brachycera</taxon>
        <taxon>Muscomorpha</taxon>
        <taxon>Ephydroidea</taxon>
        <taxon>Drosophilidae</taxon>
        <taxon>Drosophila</taxon>
        <taxon>Sophophora</taxon>
    </lineage>
</organism>
<keyword id="KW-0175">Coiled coil</keyword>
<keyword id="KW-1185">Reference proteome</keyword>
<keyword id="KW-0691">RNA editing</keyword>
<reference evidence="7" key="1">
    <citation type="journal article" date="2000" name="Science">
        <title>The genome sequence of Drosophila melanogaster.</title>
        <authorList>
            <person name="Adams M.D."/>
            <person name="Celniker S.E."/>
            <person name="Holt R.A."/>
            <person name="Evans C.A."/>
            <person name="Gocayne J.D."/>
            <person name="Amanatides P.G."/>
            <person name="Scherer S.E."/>
            <person name="Li P.W."/>
            <person name="Hoskins R.A."/>
            <person name="Galle R.F."/>
            <person name="George R.A."/>
            <person name="Lewis S.E."/>
            <person name="Richards S."/>
            <person name="Ashburner M."/>
            <person name="Henderson S.N."/>
            <person name="Sutton G.G."/>
            <person name="Wortman J.R."/>
            <person name="Yandell M.D."/>
            <person name="Zhang Q."/>
            <person name="Chen L.X."/>
            <person name="Brandon R.C."/>
            <person name="Rogers Y.-H.C."/>
            <person name="Blazej R.G."/>
            <person name="Champe M."/>
            <person name="Pfeiffer B.D."/>
            <person name="Wan K.H."/>
            <person name="Doyle C."/>
            <person name="Baxter E.G."/>
            <person name="Helt G."/>
            <person name="Nelson C.R."/>
            <person name="Miklos G.L.G."/>
            <person name="Abril J.F."/>
            <person name="Agbayani A."/>
            <person name="An H.-J."/>
            <person name="Andrews-Pfannkoch C."/>
            <person name="Baldwin D."/>
            <person name="Ballew R.M."/>
            <person name="Basu A."/>
            <person name="Baxendale J."/>
            <person name="Bayraktaroglu L."/>
            <person name="Beasley E.M."/>
            <person name="Beeson K.Y."/>
            <person name="Benos P.V."/>
            <person name="Berman B.P."/>
            <person name="Bhandari D."/>
            <person name="Bolshakov S."/>
            <person name="Borkova D."/>
            <person name="Botchan M.R."/>
            <person name="Bouck J."/>
            <person name="Brokstein P."/>
            <person name="Brottier P."/>
            <person name="Burtis K.C."/>
            <person name="Busam D.A."/>
            <person name="Butler H."/>
            <person name="Cadieu E."/>
            <person name="Center A."/>
            <person name="Chandra I."/>
            <person name="Cherry J.M."/>
            <person name="Cawley S."/>
            <person name="Dahlke C."/>
            <person name="Davenport L.B."/>
            <person name="Davies P."/>
            <person name="de Pablos B."/>
            <person name="Delcher A."/>
            <person name="Deng Z."/>
            <person name="Mays A.D."/>
            <person name="Dew I."/>
            <person name="Dietz S.M."/>
            <person name="Dodson K."/>
            <person name="Doup L.E."/>
            <person name="Downes M."/>
            <person name="Dugan-Rocha S."/>
            <person name="Dunkov B.C."/>
            <person name="Dunn P."/>
            <person name="Durbin K.J."/>
            <person name="Evangelista C.C."/>
            <person name="Ferraz C."/>
            <person name="Ferriera S."/>
            <person name="Fleischmann W."/>
            <person name="Fosler C."/>
            <person name="Gabrielian A.E."/>
            <person name="Garg N.S."/>
            <person name="Gelbart W.M."/>
            <person name="Glasser K."/>
            <person name="Glodek A."/>
            <person name="Gong F."/>
            <person name="Gorrell J.H."/>
            <person name="Gu Z."/>
            <person name="Guan P."/>
            <person name="Harris M."/>
            <person name="Harris N.L."/>
            <person name="Harvey D.A."/>
            <person name="Heiman T.J."/>
            <person name="Hernandez J.R."/>
            <person name="Houck J."/>
            <person name="Hostin D."/>
            <person name="Houston K.A."/>
            <person name="Howland T.J."/>
            <person name="Wei M.-H."/>
            <person name="Ibegwam C."/>
            <person name="Jalali M."/>
            <person name="Kalush F."/>
            <person name="Karpen G.H."/>
            <person name="Ke Z."/>
            <person name="Kennison J.A."/>
            <person name="Ketchum K.A."/>
            <person name="Kimmel B.E."/>
            <person name="Kodira C.D."/>
            <person name="Kraft C.L."/>
            <person name="Kravitz S."/>
            <person name="Kulp D."/>
            <person name="Lai Z."/>
            <person name="Lasko P."/>
            <person name="Lei Y."/>
            <person name="Levitsky A.A."/>
            <person name="Li J.H."/>
            <person name="Li Z."/>
            <person name="Liang Y."/>
            <person name="Lin X."/>
            <person name="Liu X."/>
            <person name="Mattei B."/>
            <person name="McIntosh T.C."/>
            <person name="McLeod M.P."/>
            <person name="McPherson D."/>
            <person name="Merkulov G."/>
            <person name="Milshina N.V."/>
            <person name="Mobarry C."/>
            <person name="Morris J."/>
            <person name="Moshrefi A."/>
            <person name="Mount S.M."/>
            <person name="Moy M."/>
            <person name="Murphy B."/>
            <person name="Murphy L."/>
            <person name="Muzny D.M."/>
            <person name="Nelson D.L."/>
            <person name="Nelson D.R."/>
            <person name="Nelson K.A."/>
            <person name="Nixon K."/>
            <person name="Nusskern D.R."/>
            <person name="Pacleb J.M."/>
            <person name="Palazzolo M."/>
            <person name="Pittman G.S."/>
            <person name="Pan S."/>
            <person name="Pollard J."/>
            <person name="Puri V."/>
            <person name="Reese M.G."/>
            <person name="Reinert K."/>
            <person name="Remington K."/>
            <person name="Saunders R.D.C."/>
            <person name="Scheeler F."/>
            <person name="Shen H."/>
            <person name="Shue B.C."/>
            <person name="Siden-Kiamos I."/>
            <person name="Simpson M."/>
            <person name="Skupski M.P."/>
            <person name="Smith T.J."/>
            <person name="Spier E."/>
            <person name="Spradling A.C."/>
            <person name="Stapleton M."/>
            <person name="Strong R."/>
            <person name="Sun E."/>
            <person name="Svirskas R."/>
            <person name="Tector C."/>
            <person name="Turner R."/>
            <person name="Venter E."/>
            <person name="Wang A.H."/>
            <person name="Wang X."/>
            <person name="Wang Z.-Y."/>
            <person name="Wassarman D.A."/>
            <person name="Weinstock G.M."/>
            <person name="Weissenbach J."/>
            <person name="Williams S.M."/>
            <person name="Woodage T."/>
            <person name="Worley K.C."/>
            <person name="Wu D."/>
            <person name="Yang S."/>
            <person name="Yao Q.A."/>
            <person name="Ye J."/>
            <person name="Yeh R.-F."/>
            <person name="Zaveri J.S."/>
            <person name="Zhan M."/>
            <person name="Zhang G."/>
            <person name="Zhao Q."/>
            <person name="Zheng L."/>
            <person name="Zheng X.H."/>
            <person name="Zhong F.N."/>
            <person name="Zhong W."/>
            <person name="Zhou X."/>
            <person name="Zhu S.C."/>
            <person name="Zhu X."/>
            <person name="Smith H.O."/>
            <person name="Gibbs R.A."/>
            <person name="Myers E.W."/>
            <person name="Rubin G.M."/>
            <person name="Venter J.C."/>
        </authorList>
    </citation>
    <scope>NUCLEOTIDE SEQUENCE [LARGE SCALE GENOMIC DNA]</scope>
    <source>
        <strain evidence="3">Berkeley</strain>
    </source>
</reference>
<reference evidence="6 7" key="2">
    <citation type="journal article" date="2002" name="Genome Biol.">
        <title>Annotation of the Drosophila melanogaster euchromatic genome: a systematic review.</title>
        <authorList>
            <person name="Misra S."/>
            <person name="Crosby M.A."/>
            <person name="Mungall C.J."/>
            <person name="Matthews B.B."/>
            <person name="Campbell K.S."/>
            <person name="Hradecky P."/>
            <person name="Huang Y."/>
            <person name="Kaminker J.S."/>
            <person name="Millburn G.H."/>
            <person name="Prochnik S.E."/>
            <person name="Smith C.D."/>
            <person name="Tupy J.L."/>
            <person name="Whitfield E.J."/>
            <person name="Bayraktaroglu L."/>
            <person name="Berman B.P."/>
            <person name="Bettencourt B.R."/>
            <person name="Celniker S.E."/>
            <person name="de Grey A.D.N.J."/>
            <person name="Drysdale R.A."/>
            <person name="Harris N.L."/>
            <person name="Richter J."/>
            <person name="Russo S."/>
            <person name="Schroeder A.J."/>
            <person name="Shu S.Q."/>
            <person name="Stapleton M."/>
            <person name="Yamada C."/>
            <person name="Ashburner M."/>
            <person name="Gelbart W.M."/>
            <person name="Rubin G.M."/>
            <person name="Lewis S.E."/>
        </authorList>
    </citation>
    <scope>GENOME REANNOTATION</scope>
    <source>
        <strain>Berkeley</strain>
    </source>
</reference>
<reference evidence="6 8" key="3">
    <citation type="journal article" date="2002" name="Genome Biol.">
        <title>A Drosophila full-length cDNA resource.</title>
        <authorList>
            <person name="Stapleton M."/>
            <person name="Carlson J.W."/>
            <person name="Brokstein P."/>
            <person name="Yu C."/>
            <person name="Champe M."/>
            <person name="George R.A."/>
            <person name="Guarin H."/>
            <person name="Kronmiller B."/>
            <person name="Pacleb J.M."/>
            <person name="Park S."/>
            <person name="Wan K.H."/>
            <person name="Rubin G.M."/>
            <person name="Celniker S.E."/>
        </authorList>
    </citation>
    <scope>NUCLEOTIDE SEQUENCE [LARGE SCALE MRNA]</scope>
    <scope>RNA EDITING OF POSITION 679</scope>
    <source>
        <strain evidence="8">Berkeley</strain>
        <tissue evidence="4">Head</tissue>
    </source>
</reference>
<reference key="4">
    <citation type="submission" date="2008-09" db="EMBL/GenBank/DDBJ databases">
        <authorList>
            <person name="Carlson J.W."/>
            <person name="Booth B."/>
            <person name="Frise E."/>
            <person name="Park S."/>
            <person name="Wan K.H."/>
            <person name="Yu C."/>
            <person name="Celniker S.E."/>
        </authorList>
    </citation>
    <scope>NUCLEOTIDE SEQUENCE [LARGE SCALE MRNA]</scope>
    <source>
        <strain>Berkeley</strain>
    </source>
</reference>
<reference evidence="6" key="5">
    <citation type="journal article" date="2006" name="RNA">
        <title>RNA editing in Drosophila melanogaster: new targets and functional consequences.</title>
        <authorList>
            <person name="Stapleton M."/>
            <person name="Carlson J.W."/>
            <person name="Celniker S.E."/>
        </authorList>
    </citation>
    <scope>RNA EDITING OF POSITION 679</scope>
</reference>
<gene>
    <name type="ORF">CG43427</name>
</gene>
<comment type="RNA editing">
    <location>
        <position position="679" evidence="4 5"/>
    </location>
    <text evidence="5">Partially edited. Target of Adar.</text>
</comment>
<proteinExistence type="evidence at transcript level"/>